<comment type="function">
    <text evidence="1">Catalyzes the phosphorylation of the position 2 hydroxy group of 4-diphosphocytidyl-2C-methyl-D-erythritol.</text>
</comment>
<comment type="catalytic activity">
    <reaction evidence="1">
        <text>4-CDP-2-C-methyl-D-erythritol + ATP = 4-CDP-2-C-methyl-D-erythritol 2-phosphate + ADP + H(+)</text>
        <dbReference type="Rhea" id="RHEA:18437"/>
        <dbReference type="ChEBI" id="CHEBI:15378"/>
        <dbReference type="ChEBI" id="CHEBI:30616"/>
        <dbReference type="ChEBI" id="CHEBI:57823"/>
        <dbReference type="ChEBI" id="CHEBI:57919"/>
        <dbReference type="ChEBI" id="CHEBI:456216"/>
        <dbReference type="EC" id="2.7.1.148"/>
    </reaction>
</comment>
<comment type="pathway">
    <text evidence="1">Isoprenoid biosynthesis; isopentenyl diphosphate biosynthesis via DXP pathway; isopentenyl diphosphate from 1-deoxy-D-xylulose 5-phosphate: step 3/6.</text>
</comment>
<comment type="similarity">
    <text evidence="1">Belongs to the GHMP kinase family. IspE subfamily.</text>
</comment>
<sequence length="311" mass="31776">MLSVVPRPVVVRAPSKVNLHLAVGDLRDDGYHELNTVFQALSLSDTVSVAPAETLSVTVRGEDARVVPTDSSNLVWQAAEMLAAESGRRPDVEIAIDKGIPVAGGMAGGSADAAATLVGLNALWQLDLSREELDGFAAKLGSDVPFSLHGGTAVGTGRGERLLPVLSRSTFHWVLALAKVGLSTPTVFRELDRLRADGNPPRLGGPEDLMHALTTGDAATLAPLLGNDLQSAALSLNPGLRRTLRAGVAAGALAGIVSGSGPTCAFLCAEADAAVRVSAELAGAGVCRTVRVASGPVPGARIINDAAEGSH</sequence>
<dbReference type="EC" id="2.7.1.148" evidence="1"/>
<dbReference type="EMBL" id="CP000431">
    <property type="protein sequence ID" value="ABG97463.1"/>
    <property type="molecule type" value="Genomic_DNA"/>
</dbReference>
<dbReference type="RefSeq" id="WP_011597813.1">
    <property type="nucleotide sequence ID" value="NC_008268.1"/>
</dbReference>
<dbReference type="SMR" id="Q0S4S3"/>
<dbReference type="KEGG" id="rha:RHA1_ro05684"/>
<dbReference type="PATRIC" id="fig|101510.16.peg.5728"/>
<dbReference type="eggNOG" id="COG1947">
    <property type="taxonomic scope" value="Bacteria"/>
</dbReference>
<dbReference type="HOGENOM" id="CLU_053057_1_1_11"/>
<dbReference type="OrthoDB" id="3173073at2"/>
<dbReference type="UniPathway" id="UPA00056">
    <property type="reaction ID" value="UER00094"/>
</dbReference>
<dbReference type="Proteomes" id="UP000008710">
    <property type="component" value="Chromosome"/>
</dbReference>
<dbReference type="GO" id="GO:0050515">
    <property type="term" value="F:4-(cytidine 5'-diphospho)-2-C-methyl-D-erythritol kinase activity"/>
    <property type="evidence" value="ECO:0007669"/>
    <property type="project" value="UniProtKB-UniRule"/>
</dbReference>
<dbReference type="GO" id="GO:0005524">
    <property type="term" value="F:ATP binding"/>
    <property type="evidence" value="ECO:0007669"/>
    <property type="project" value="UniProtKB-UniRule"/>
</dbReference>
<dbReference type="GO" id="GO:0019288">
    <property type="term" value="P:isopentenyl diphosphate biosynthetic process, methylerythritol 4-phosphate pathway"/>
    <property type="evidence" value="ECO:0007669"/>
    <property type="project" value="UniProtKB-UniRule"/>
</dbReference>
<dbReference type="GO" id="GO:0016114">
    <property type="term" value="P:terpenoid biosynthetic process"/>
    <property type="evidence" value="ECO:0007669"/>
    <property type="project" value="InterPro"/>
</dbReference>
<dbReference type="Gene3D" id="3.30.230.10">
    <property type="match status" value="1"/>
</dbReference>
<dbReference type="Gene3D" id="3.30.70.890">
    <property type="entry name" value="GHMP kinase, C-terminal domain"/>
    <property type="match status" value="1"/>
</dbReference>
<dbReference type="HAMAP" id="MF_00061">
    <property type="entry name" value="IspE"/>
    <property type="match status" value="1"/>
</dbReference>
<dbReference type="InterPro" id="IPR013750">
    <property type="entry name" value="GHMP_kinase_C_dom"/>
</dbReference>
<dbReference type="InterPro" id="IPR036554">
    <property type="entry name" value="GHMP_kinase_C_sf"/>
</dbReference>
<dbReference type="InterPro" id="IPR006204">
    <property type="entry name" value="GHMP_kinase_N_dom"/>
</dbReference>
<dbReference type="InterPro" id="IPR004424">
    <property type="entry name" value="IspE"/>
</dbReference>
<dbReference type="InterPro" id="IPR020568">
    <property type="entry name" value="Ribosomal_Su5_D2-typ_SF"/>
</dbReference>
<dbReference type="InterPro" id="IPR014721">
    <property type="entry name" value="Ribsml_uS5_D2-typ_fold_subgr"/>
</dbReference>
<dbReference type="NCBIfam" id="TIGR00154">
    <property type="entry name" value="ispE"/>
    <property type="match status" value="1"/>
</dbReference>
<dbReference type="NCBIfam" id="NF002870">
    <property type="entry name" value="PRK03188.1"/>
    <property type="match status" value="1"/>
</dbReference>
<dbReference type="PANTHER" id="PTHR43527">
    <property type="entry name" value="4-DIPHOSPHOCYTIDYL-2-C-METHYL-D-ERYTHRITOL KINASE, CHLOROPLASTIC"/>
    <property type="match status" value="1"/>
</dbReference>
<dbReference type="PANTHER" id="PTHR43527:SF2">
    <property type="entry name" value="4-DIPHOSPHOCYTIDYL-2-C-METHYL-D-ERYTHRITOL KINASE, CHLOROPLASTIC"/>
    <property type="match status" value="1"/>
</dbReference>
<dbReference type="Pfam" id="PF08544">
    <property type="entry name" value="GHMP_kinases_C"/>
    <property type="match status" value="1"/>
</dbReference>
<dbReference type="Pfam" id="PF00288">
    <property type="entry name" value="GHMP_kinases_N"/>
    <property type="match status" value="1"/>
</dbReference>
<dbReference type="PIRSF" id="PIRSF010376">
    <property type="entry name" value="IspE"/>
    <property type="match status" value="1"/>
</dbReference>
<dbReference type="SUPFAM" id="SSF55060">
    <property type="entry name" value="GHMP Kinase, C-terminal domain"/>
    <property type="match status" value="1"/>
</dbReference>
<dbReference type="SUPFAM" id="SSF54211">
    <property type="entry name" value="Ribosomal protein S5 domain 2-like"/>
    <property type="match status" value="1"/>
</dbReference>
<reference key="1">
    <citation type="journal article" date="2006" name="Proc. Natl. Acad. Sci. U.S.A.">
        <title>The complete genome of Rhodococcus sp. RHA1 provides insights into a catabolic powerhouse.</title>
        <authorList>
            <person name="McLeod M.P."/>
            <person name="Warren R.L."/>
            <person name="Hsiao W.W.L."/>
            <person name="Araki N."/>
            <person name="Myhre M."/>
            <person name="Fernandes C."/>
            <person name="Miyazawa D."/>
            <person name="Wong W."/>
            <person name="Lillquist A.L."/>
            <person name="Wang D."/>
            <person name="Dosanjh M."/>
            <person name="Hara H."/>
            <person name="Petrescu A."/>
            <person name="Morin R.D."/>
            <person name="Yang G."/>
            <person name="Stott J.M."/>
            <person name="Schein J.E."/>
            <person name="Shin H."/>
            <person name="Smailus D."/>
            <person name="Siddiqui A.S."/>
            <person name="Marra M.A."/>
            <person name="Jones S.J.M."/>
            <person name="Holt R."/>
            <person name="Brinkman F.S.L."/>
            <person name="Miyauchi K."/>
            <person name="Fukuda M."/>
            <person name="Davies J.E."/>
            <person name="Mohn W.W."/>
            <person name="Eltis L.D."/>
        </authorList>
    </citation>
    <scope>NUCLEOTIDE SEQUENCE [LARGE SCALE GENOMIC DNA]</scope>
    <source>
        <strain>RHA1</strain>
    </source>
</reference>
<proteinExistence type="inferred from homology"/>
<organism>
    <name type="scientific">Rhodococcus jostii (strain RHA1)</name>
    <dbReference type="NCBI Taxonomy" id="101510"/>
    <lineage>
        <taxon>Bacteria</taxon>
        <taxon>Bacillati</taxon>
        <taxon>Actinomycetota</taxon>
        <taxon>Actinomycetes</taxon>
        <taxon>Mycobacteriales</taxon>
        <taxon>Nocardiaceae</taxon>
        <taxon>Rhodococcus</taxon>
    </lineage>
</organism>
<evidence type="ECO:0000255" key="1">
    <source>
        <dbReference type="HAMAP-Rule" id="MF_00061"/>
    </source>
</evidence>
<name>ISPE_RHOJR</name>
<gene>
    <name evidence="1" type="primary">ispE</name>
    <name type="ordered locus">RHA1_ro05684</name>
</gene>
<accession>Q0S4S3</accession>
<protein>
    <recommendedName>
        <fullName evidence="1">4-diphosphocytidyl-2-C-methyl-D-erythritol kinase</fullName>
        <shortName evidence="1">CMK</shortName>
        <ecNumber evidence="1">2.7.1.148</ecNumber>
    </recommendedName>
    <alternativeName>
        <fullName evidence="1">4-(cytidine-5'-diphospho)-2-C-methyl-D-erythritol kinase</fullName>
    </alternativeName>
</protein>
<keyword id="KW-0067">ATP-binding</keyword>
<keyword id="KW-0414">Isoprene biosynthesis</keyword>
<keyword id="KW-0418">Kinase</keyword>
<keyword id="KW-0547">Nucleotide-binding</keyword>
<keyword id="KW-0808">Transferase</keyword>
<feature type="chain" id="PRO_1000007884" description="4-diphosphocytidyl-2-C-methyl-D-erythritol kinase">
    <location>
        <begin position="1"/>
        <end position="311"/>
    </location>
</feature>
<feature type="active site" evidence="1">
    <location>
        <position position="16"/>
    </location>
</feature>
<feature type="active site" evidence="1">
    <location>
        <position position="143"/>
    </location>
</feature>
<feature type="binding site" evidence="1">
    <location>
        <begin position="101"/>
        <end position="111"/>
    </location>
    <ligand>
        <name>ATP</name>
        <dbReference type="ChEBI" id="CHEBI:30616"/>
    </ligand>
</feature>